<gene>
    <name evidence="6 10" type="primary">SFXN4</name>
    <name evidence="7" type="synonym">BCRM1</name>
</gene>
<organism>
    <name type="scientific">Homo sapiens</name>
    <name type="common">Human</name>
    <dbReference type="NCBI Taxonomy" id="9606"/>
    <lineage>
        <taxon>Eukaryota</taxon>
        <taxon>Metazoa</taxon>
        <taxon>Chordata</taxon>
        <taxon>Craniata</taxon>
        <taxon>Vertebrata</taxon>
        <taxon>Euteleostomi</taxon>
        <taxon>Mammalia</taxon>
        <taxon>Eutheria</taxon>
        <taxon>Euarchontoglires</taxon>
        <taxon>Primates</taxon>
        <taxon>Haplorrhini</taxon>
        <taxon>Catarrhini</taxon>
        <taxon>Hominidae</taxon>
        <taxon>Homo</taxon>
    </lineage>
</organism>
<accession>Q6P4A7</accession>
<accession>Q6WSU4</accession>
<accession>Q86TD9</accession>
<protein>
    <recommendedName>
        <fullName evidence="6">Sideroflexin-4</fullName>
    </recommendedName>
    <alternativeName>
        <fullName evidence="7">Breast cancer resistance marker 1</fullName>
    </alternativeName>
</protein>
<proteinExistence type="evidence at protein level"/>
<comment type="function">
    <text evidence="1 4">Mitochondrial amino-acid transporter (By similarity). Does not act as a serine transporter: not able to mediate transport of serine into mitochondria (PubMed:30442778).</text>
</comment>
<comment type="subcellular location">
    <subcellularLocation>
        <location evidence="3 9">Mitochondrion inner membrane</location>
        <topology evidence="2">Multi-pass membrane protein</topology>
    </subcellularLocation>
</comment>
<comment type="alternative products">
    <event type="alternative splicing"/>
    <isoform>
        <id>Q6P4A7-1</id>
        <name>1</name>
        <sequence type="displayed"/>
    </isoform>
    <isoform>
        <id>Q6P4A7-2</id>
        <name>2</name>
        <sequence type="described" ref="VSP_014609 VSP_014610"/>
    </isoform>
    <isoform>
        <id>Q6P4A7-3</id>
        <name>3</name>
        <sequence type="described" ref="VSP_014608"/>
    </isoform>
</comment>
<comment type="disease" evidence="3">
    <disease id="DI-03996">
        <name>Combined oxidative phosphorylation deficiency 18</name>
        <acronym>COXPD18</acronym>
        <description>An autosomal recessive disorder of mitochondrial dysfunction characterized by intrauterine growth retardation, hypotonia, visual impairment, speech delay, and lactic acidosis associated with decreased mitochondrial respiratory chain activity. Affected patients may also show hematologic abnormalities, mainly macrocytic anemia.</description>
        <dbReference type="MIM" id="615578"/>
    </disease>
    <text>The disease is caused by variants affecting the gene represented in this entry.</text>
</comment>
<comment type="similarity">
    <text evidence="8">Belongs to the sideroflexin family.</text>
</comment>
<name>SFXN4_HUMAN</name>
<keyword id="KW-0007">Acetylation</keyword>
<keyword id="KW-0025">Alternative splicing</keyword>
<keyword id="KW-0029">Amino-acid transport</keyword>
<keyword id="KW-0472">Membrane</keyword>
<keyword id="KW-0496">Mitochondrion</keyword>
<keyword id="KW-0999">Mitochondrion inner membrane</keyword>
<keyword id="KW-1274">Primary mitochondrial disease</keyword>
<keyword id="KW-1267">Proteomics identification</keyword>
<keyword id="KW-1185">Reference proteome</keyword>
<keyword id="KW-0812">Transmembrane</keyword>
<keyword id="KW-1133">Transmembrane helix</keyword>
<keyword id="KW-0813">Transport</keyword>
<evidence type="ECO:0000250" key="1">
    <source>
        <dbReference type="UniProtKB" id="Q9H9B4"/>
    </source>
</evidence>
<evidence type="ECO:0000255" key="2"/>
<evidence type="ECO:0000269" key="3">
    <source>
    </source>
</evidence>
<evidence type="ECO:0000269" key="4">
    <source>
    </source>
</evidence>
<evidence type="ECO:0000303" key="5">
    <source>
    </source>
</evidence>
<evidence type="ECO:0000303" key="6">
    <source>
    </source>
</evidence>
<evidence type="ECO:0000303" key="7">
    <source ref="1"/>
</evidence>
<evidence type="ECO:0000305" key="8"/>
<evidence type="ECO:0000305" key="9">
    <source>
    </source>
</evidence>
<evidence type="ECO:0000312" key="10">
    <source>
        <dbReference type="HGNC" id="HGNC:16088"/>
    </source>
</evidence>
<evidence type="ECO:0007744" key="11">
    <source>
    </source>
</evidence>
<evidence type="ECO:0007744" key="12">
    <source>
    </source>
</evidence>
<evidence type="ECO:0007744" key="13">
    <source>
    </source>
</evidence>
<reference key="1">
    <citation type="submission" date="2001-01" db="EMBL/GenBank/DDBJ databases">
        <title>BCRM-1, a novel tumor marker for refractory cancers.</title>
        <authorList>
            <person name="Auclair D."/>
            <person name="Gong Y."/>
            <person name="Dai M."/>
            <person name="Kraeft S.-K."/>
            <person name="Chen L.B."/>
        </authorList>
    </citation>
    <scope>NUCLEOTIDE SEQUENCE [MRNA] (ISOFORM 3)</scope>
    <source>
        <tissue>Mammary tumor</tissue>
    </source>
</reference>
<reference key="2">
    <citation type="journal article" date="2003" name="DNA Seq.">
        <title>Molecular cloning and characterization of a novel human putative transmembrane protein homologous to mouse sideroflexin associated with sideroblastic anemia.</title>
        <authorList>
            <person name="Zheng H."/>
            <person name="Ji C."/>
            <person name="Zou X."/>
            <person name="Wu M."/>
            <person name="Jin Z."/>
            <person name="Yin G."/>
            <person name="Li J."/>
            <person name="Feng C."/>
            <person name="Cheng H."/>
            <person name="Gu S."/>
            <person name="Xie Y."/>
            <person name="Mao Y."/>
        </authorList>
    </citation>
    <scope>NUCLEOTIDE SEQUENCE [MRNA] (ISOFORM 2)</scope>
</reference>
<reference key="3">
    <citation type="journal article" date="2004" name="Nature">
        <title>The DNA sequence and comparative analysis of human chromosome 10.</title>
        <authorList>
            <person name="Deloukas P."/>
            <person name="Earthrowl M.E."/>
            <person name="Grafham D.V."/>
            <person name="Rubenfield M."/>
            <person name="French L."/>
            <person name="Steward C.A."/>
            <person name="Sims S.K."/>
            <person name="Jones M.C."/>
            <person name="Searle S."/>
            <person name="Scott C."/>
            <person name="Howe K."/>
            <person name="Hunt S.E."/>
            <person name="Andrews T.D."/>
            <person name="Gilbert J.G.R."/>
            <person name="Swarbreck D."/>
            <person name="Ashurst J.L."/>
            <person name="Taylor A."/>
            <person name="Battles J."/>
            <person name="Bird C.P."/>
            <person name="Ainscough R."/>
            <person name="Almeida J.P."/>
            <person name="Ashwell R.I.S."/>
            <person name="Ambrose K.D."/>
            <person name="Babbage A.K."/>
            <person name="Bagguley C.L."/>
            <person name="Bailey J."/>
            <person name="Banerjee R."/>
            <person name="Bates K."/>
            <person name="Beasley H."/>
            <person name="Bray-Allen S."/>
            <person name="Brown A.J."/>
            <person name="Brown J.Y."/>
            <person name="Burford D.C."/>
            <person name="Burrill W."/>
            <person name="Burton J."/>
            <person name="Cahill P."/>
            <person name="Camire D."/>
            <person name="Carter N.P."/>
            <person name="Chapman J.C."/>
            <person name="Clark S.Y."/>
            <person name="Clarke G."/>
            <person name="Clee C.M."/>
            <person name="Clegg S."/>
            <person name="Corby N."/>
            <person name="Coulson A."/>
            <person name="Dhami P."/>
            <person name="Dutta I."/>
            <person name="Dunn M."/>
            <person name="Faulkner L."/>
            <person name="Frankish A."/>
            <person name="Frankland J.A."/>
            <person name="Garner P."/>
            <person name="Garnett J."/>
            <person name="Gribble S."/>
            <person name="Griffiths C."/>
            <person name="Grocock R."/>
            <person name="Gustafson E."/>
            <person name="Hammond S."/>
            <person name="Harley J.L."/>
            <person name="Hart E."/>
            <person name="Heath P.D."/>
            <person name="Ho T.P."/>
            <person name="Hopkins B."/>
            <person name="Horne J."/>
            <person name="Howden P.J."/>
            <person name="Huckle E."/>
            <person name="Hynds C."/>
            <person name="Johnson C."/>
            <person name="Johnson D."/>
            <person name="Kana A."/>
            <person name="Kay M."/>
            <person name="Kimberley A.M."/>
            <person name="Kershaw J.K."/>
            <person name="Kokkinaki M."/>
            <person name="Laird G.K."/>
            <person name="Lawlor S."/>
            <person name="Lee H.M."/>
            <person name="Leongamornlert D.A."/>
            <person name="Laird G."/>
            <person name="Lloyd C."/>
            <person name="Lloyd D.M."/>
            <person name="Loveland J."/>
            <person name="Lovell J."/>
            <person name="McLaren S."/>
            <person name="McLay K.E."/>
            <person name="McMurray A."/>
            <person name="Mashreghi-Mohammadi M."/>
            <person name="Matthews L."/>
            <person name="Milne S."/>
            <person name="Nickerson T."/>
            <person name="Nguyen M."/>
            <person name="Overton-Larty E."/>
            <person name="Palmer S.A."/>
            <person name="Pearce A.V."/>
            <person name="Peck A.I."/>
            <person name="Pelan S."/>
            <person name="Phillimore B."/>
            <person name="Porter K."/>
            <person name="Rice C.M."/>
            <person name="Rogosin A."/>
            <person name="Ross M.T."/>
            <person name="Sarafidou T."/>
            <person name="Sehra H.K."/>
            <person name="Shownkeen R."/>
            <person name="Skuce C.D."/>
            <person name="Smith M."/>
            <person name="Standring L."/>
            <person name="Sycamore N."/>
            <person name="Tester J."/>
            <person name="Thorpe A."/>
            <person name="Torcasso W."/>
            <person name="Tracey A."/>
            <person name="Tromans A."/>
            <person name="Tsolas J."/>
            <person name="Wall M."/>
            <person name="Walsh J."/>
            <person name="Wang H."/>
            <person name="Weinstock K."/>
            <person name="West A.P."/>
            <person name="Willey D.L."/>
            <person name="Whitehead S.L."/>
            <person name="Wilming L."/>
            <person name="Wray P.W."/>
            <person name="Young L."/>
            <person name="Chen Y."/>
            <person name="Lovering R.C."/>
            <person name="Moschonas N.K."/>
            <person name="Siebert R."/>
            <person name="Fechtel K."/>
            <person name="Bentley D."/>
            <person name="Durbin R.M."/>
            <person name="Hubbard T."/>
            <person name="Doucette-Stamm L."/>
            <person name="Beck S."/>
            <person name="Smith D.R."/>
            <person name="Rogers J."/>
        </authorList>
    </citation>
    <scope>NUCLEOTIDE SEQUENCE [LARGE SCALE GENOMIC DNA]</scope>
</reference>
<reference key="4">
    <citation type="journal article" date="2004" name="Genome Res.">
        <title>The status, quality, and expansion of the NIH full-length cDNA project: the Mammalian Gene Collection (MGC).</title>
        <authorList>
            <consortium name="The MGC Project Team"/>
        </authorList>
    </citation>
    <scope>NUCLEOTIDE SEQUENCE [LARGE SCALE MRNA] (ISOFORM 1)</scope>
    <source>
        <tissue>Placenta</tissue>
    </source>
</reference>
<reference key="5">
    <citation type="journal article" date="2009" name="Anal. Chem.">
        <title>Lys-N and trypsin cover complementary parts of the phosphoproteome in a refined SCX-based approach.</title>
        <authorList>
            <person name="Gauci S."/>
            <person name="Helbig A.O."/>
            <person name="Slijper M."/>
            <person name="Krijgsveld J."/>
            <person name="Heck A.J."/>
            <person name="Mohammed S."/>
        </authorList>
    </citation>
    <scope>ACETYLATION [LARGE SCALE ANALYSIS] AT SER-2</scope>
    <scope>CLEAVAGE OF INITIATOR METHIONINE [LARGE SCALE ANALYSIS]</scope>
    <scope>IDENTIFICATION BY MASS SPECTROMETRY [LARGE SCALE ANALYSIS]</scope>
</reference>
<reference key="6">
    <citation type="journal article" date="2009" name="Science">
        <title>Lysine acetylation targets protein complexes and co-regulates major cellular functions.</title>
        <authorList>
            <person name="Choudhary C."/>
            <person name="Kumar C."/>
            <person name="Gnad F."/>
            <person name="Nielsen M.L."/>
            <person name="Rehman M."/>
            <person name="Walther T.C."/>
            <person name="Olsen J.V."/>
            <person name="Mann M."/>
        </authorList>
    </citation>
    <scope>ACETYLATION [LARGE SCALE ANALYSIS] AT LYS-197</scope>
    <scope>IDENTIFICATION BY MASS SPECTROMETRY [LARGE SCALE ANALYSIS]</scope>
</reference>
<reference key="7">
    <citation type="journal article" date="2011" name="BMC Syst. Biol.">
        <title>Initial characterization of the human central proteome.</title>
        <authorList>
            <person name="Burkard T.R."/>
            <person name="Planyavsky M."/>
            <person name="Kaupe I."/>
            <person name="Breitwieser F.P."/>
            <person name="Buerckstuemmer T."/>
            <person name="Bennett K.L."/>
            <person name="Superti-Furga G."/>
            <person name="Colinge J."/>
        </authorList>
    </citation>
    <scope>IDENTIFICATION BY MASS SPECTROMETRY [LARGE SCALE ANALYSIS]</scope>
</reference>
<reference key="8">
    <citation type="journal article" date="2012" name="Proc. Natl. Acad. Sci. U.S.A.">
        <title>N-terminal acetylome analyses and functional insights of the N-terminal acetyltransferase NatB.</title>
        <authorList>
            <person name="Van Damme P."/>
            <person name="Lasa M."/>
            <person name="Polevoda B."/>
            <person name="Gazquez C."/>
            <person name="Elosegui-Artola A."/>
            <person name="Kim D.S."/>
            <person name="De Juan-Pardo E."/>
            <person name="Demeyer K."/>
            <person name="Hole K."/>
            <person name="Larrea E."/>
            <person name="Timmerman E."/>
            <person name="Prieto J."/>
            <person name="Arnesen T."/>
            <person name="Sherman F."/>
            <person name="Gevaert K."/>
            <person name="Aldabe R."/>
        </authorList>
    </citation>
    <scope>ACETYLATION [LARGE SCALE ANALYSIS] AT SER-2</scope>
    <scope>CLEAVAGE OF INITIATOR METHIONINE [LARGE SCALE ANALYSIS]</scope>
    <scope>IDENTIFICATION BY MASS SPECTROMETRY [LARGE SCALE ANALYSIS]</scope>
</reference>
<reference key="9">
    <citation type="journal article" date="2013" name="Am. J. Hum. Genet.">
        <title>Macrocytic anemia and mitochondriopathy resulting from a defect in sideroflexin 4.</title>
        <authorList>
            <person name="Hildick-Smith G.J."/>
            <person name="Cooney J.D."/>
            <person name="Garone C."/>
            <person name="Kremer L.S."/>
            <person name="Haack T.B."/>
            <person name="Thon J.N."/>
            <person name="Miyata N."/>
            <person name="Lieber D.S."/>
            <person name="Calvo S.E."/>
            <person name="Akman H.O."/>
            <person name="Yien Y.Y."/>
            <person name="Huston N.C."/>
            <person name="Branco D.S."/>
            <person name="Shah D.I."/>
            <person name="Freedman M.L."/>
            <person name="Koehler C.M."/>
            <person name="Italiano J.E. Jr."/>
            <person name="Merkenschlager A."/>
            <person name="Beblo S."/>
            <person name="Strom T.M."/>
            <person name="Meitinger T."/>
            <person name="Freisinger P."/>
            <person name="Donati M.A."/>
            <person name="Prokisch H."/>
            <person name="Mootha V.K."/>
            <person name="DiMauro S."/>
            <person name="Paw B.H."/>
        </authorList>
    </citation>
    <scope>INVOLVEMENT IN COXPD18</scope>
    <scope>SUBCELLULAR LOCATION</scope>
</reference>
<reference key="10">
    <citation type="journal article" date="2015" name="Proteomics">
        <title>N-terminome analysis of the human mitochondrial proteome.</title>
        <authorList>
            <person name="Vaca Jacome A.S."/>
            <person name="Rabilloud T."/>
            <person name="Schaeffer-Reiss C."/>
            <person name="Rompais M."/>
            <person name="Ayoub D."/>
            <person name="Lane L."/>
            <person name="Bairoch A."/>
            <person name="Van Dorsselaer A."/>
            <person name="Carapito C."/>
        </authorList>
    </citation>
    <scope>IDENTIFICATION BY MASS SPECTROMETRY [LARGE SCALE ANALYSIS]</scope>
</reference>
<reference key="11">
    <citation type="journal article" date="2018" name="Science">
        <title>SFXN1 is a mitochondrial serine transporter required for one-carbon metabolism.</title>
        <authorList>
            <person name="Kory N."/>
            <person name="Wyant G.A."/>
            <person name="Prakash G."/>
            <person name="Uit de Bos J."/>
            <person name="Bottanelli F."/>
            <person name="Pacold M.E."/>
            <person name="Chan S.H."/>
            <person name="Lewis C.A."/>
            <person name="Wang T."/>
            <person name="Keys H.R."/>
            <person name="Guo Y.E."/>
            <person name="Sabatini D.M."/>
        </authorList>
    </citation>
    <scope>FUNCTION</scope>
    <scope>SUBCELLULAR LOCATION</scope>
</reference>
<dbReference type="EMBL" id="AF336980">
    <property type="protein sequence ID" value="AAP23066.1"/>
    <property type="molecule type" value="mRNA"/>
</dbReference>
<dbReference type="EMBL" id="AY269785">
    <property type="protein sequence ID" value="AAP97074.1"/>
    <property type="molecule type" value="mRNA"/>
</dbReference>
<dbReference type="EMBL" id="AL355598">
    <property type="status" value="NOT_ANNOTATED_CDS"/>
    <property type="molecule type" value="Genomic_DNA"/>
</dbReference>
<dbReference type="EMBL" id="AL355861">
    <property type="status" value="NOT_ANNOTATED_CDS"/>
    <property type="molecule type" value="Genomic_DNA"/>
</dbReference>
<dbReference type="EMBL" id="BC063562">
    <property type="protein sequence ID" value="AAH63562.1"/>
    <property type="molecule type" value="mRNA"/>
</dbReference>
<dbReference type="CCDS" id="CCDS7610.1">
    <molecule id="Q6P4A7-1"/>
</dbReference>
<dbReference type="RefSeq" id="NP_998814.1">
    <molecule id="Q6P4A7-1"/>
    <property type="nucleotide sequence ID" value="NM_213649.2"/>
</dbReference>
<dbReference type="RefSeq" id="XP_005269583.1">
    <molecule id="Q6P4A7-3"/>
    <property type="nucleotide sequence ID" value="XM_005269526.3"/>
</dbReference>
<dbReference type="RefSeq" id="XP_005269584.1">
    <property type="nucleotide sequence ID" value="XM_005269527.1"/>
</dbReference>
<dbReference type="RefSeq" id="XP_011537584.1">
    <molecule id="Q6P4A7-3"/>
    <property type="nucleotide sequence ID" value="XM_011539282.3"/>
</dbReference>
<dbReference type="RefSeq" id="XP_047280541.1">
    <molecule id="Q6P4A7-3"/>
    <property type="nucleotide sequence ID" value="XM_047424585.1"/>
</dbReference>
<dbReference type="RefSeq" id="XP_054220735.1">
    <molecule id="Q6P4A7-3"/>
    <property type="nucleotide sequence ID" value="XM_054364760.1"/>
</dbReference>
<dbReference type="BioGRID" id="125645">
    <property type="interactions" value="119"/>
</dbReference>
<dbReference type="FunCoup" id="Q6P4A7">
    <property type="interactions" value="1697"/>
</dbReference>
<dbReference type="IntAct" id="Q6P4A7">
    <property type="interactions" value="74"/>
</dbReference>
<dbReference type="MINT" id="Q6P4A7"/>
<dbReference type="STRING" id="9606.ENSP00000347924"/>
<dbReference type="TCDB" id="2.A.54.1.3">
    <property type="family name" value="the sideroflexin (sfxn) family (formerly the mitochondrial tricarboxylate carrier (mtc) family)"/>
</dbReference>
<dbReference type="iPTMnet" id="Q6P4A7"/>
<dbReference type="PhosphoSitePlus" id="Q6P4A7"/>
<dbReference type="SwissPalm" id="Q6P4A7"/>
<dbReference type="BioMuta" id="SFXN4"/>
<dbReference type="DMDM" id="71153761"/>
<dbReference type="jPOST" id="Q6P4A7"/>
<dbReference type="MassIVE" id="Q6P4A7"/>
<dbReference type="PaxDb" id="9606-ENSP00000347924"/>
<dbReference type="PeptideAtlas" id="Q6P4A7"/>
<dbReference type="ProteomicsDB" id="66955">
    <molecule id="Q6P4A7-1"/>
</dbReference>
<dbReference type="ProteomicsDB" id="66956">
    <molecule id="Q6P4A7-2"/>
</dbReference>
<dbReference type="ProteomicsDB" id="66957">
    <molecule id="Q6P4A7-3"/>
</dbReference>
<dbReference type="Pumba" id="Q6P4A7"/>
<dbReference type="Antibodypedia" id="18795">
    <property type="antibodies" value="113 antibodies from 21 providers"/>
</dbReference>
<dbReference type="DNASU" id="119559"/>
<dbReference type="Ensembl" id="ENST00000355697.7">
    <molecule id="Q6P4A7-1"/>
    <property type="protein sequence ID" value="ENSP00000347924.2"/>
    <property type="gene ID" value="ENSG00000183605.17"/>
</dbReference>
<dbReference type="GeneID" id="119559"/>
<dbReference type="KEGG" id="hsa:119559"/>
<dbReference type="MANE-Select" id="ENST00000355697.7">
    <property type="protein sequence ID" value="ENSP00000347924.2"/>
    <property type="RefSeq nucleotide sequence ID" value="NM_213649.2"/>
    <property type="RefSeq protein sequence ID" value="NP_998814.1"/>
</dbReference>
<dbReference type="UCSC" id="uc001leb.4">
    <molecule id="Q6P4A7-1"/>
    <property type="organism name" value="human"/>
</dbReference>
<dbReference type="AGR" id="HGNC:16088"/>
<dbReference type="CTD" id="119559"/>
<dbReference type="DisGeNET" id="119559"/>
<dbReference type="GeneCards" id="SFXN4"/>
<dbReference type="HGNC" id="HGNC:16088">
    <property type="gene designation" value="SFXN4"/>
</dbReference>
<dbReference type="HPA" id="ENSG00000183605">
    <property type="expression patterns" value="Low tissue specificity"/>
</dbReference>
<dbReference type="MalaCards" id="SFXN4"/>
<dbReference type="MIM" id="615564">
    <property type="type" value="gene"/>
</dbReference>
<dbReference type="MIM" id="615578">
    <property type="type" value="phenotype"/>
</dbReference>
<dbReference type="neXtProt" id="NX_Q6P4A7"/>
<dbReference type="OpenTargets" id="ENSG00000183605"/>
<dbReference type="Orphanet" id="391348">
    <property type="disease" value="Growth and developmental delay-hypotonia-vision impairment-lactic acidosis syndrome"/>
</dbReference>
<dbReference type="PharmGKB" id="PA38093"/>
<dbReference type="VEuPathDB" id="HostDB:ENSG00000183605"/>
<dbReference type="eggNOG" id="KOG3767">
    <property type="taxonomic scope" value="Eukaryota"/>
</dbReference>
<dbReference type="GeneTree" id="ENSGT01030000234641"/>
<dbReference type="HOGENOM" id="CLU_039425_3_0_1"/>
<dbReference type="InParanoid" id="Q6P4A7"/>
<dbReference type="OMA" id="NVRFWIA"/>
<dbReference type="OrthoDB" id="6608471at2759"/>
<dbReference type="PAN-GO" id="Q6P4A7">
    <property type="GO annotations" value="3 GO annotations based on evolutionary models"/>
</dbReference>
<dbReference type="PhylomeDB" id="Q6P4A7"/>
<dbReference type="TreeFam" id="TF313205"/>
<dbReference type="PathwayCommons" id="Q6P4A7"/>
<dbReference type="Reactome" id="R-HSA-6799198">
    <property type="pathway name" value="Complex I biogenesis"/>
</dbReference>
<dbReference type="SignaLink" id="Q6P4A7"/>
<dbReference type="BioGRID-ORCS" id="119559">
    <property type="hits" value="21 hits in 1158 CRISPR screens"/>
</dbReference>
<dbReference type="ChiTaRS" id="SFXN4">
    <property type="organism name" value="human"/>
</dbReference>
<dbReference type="GenomeRNAi" id="119559"/>
<dbReference type="Pharos" id="Q6P4A7">
    <property type="development level" value="Tbio"/>
</dbReference>
<dbReference type="PRO" id="PR:Q6P4A7"/>
<dbReference type="Proteomes" id="UP000005640">
    <property type="component" value="Chromosome 10"/>
</dbReference>
<dbReference type="RNAct" id="Q6P4A7">
    <property type="molecule type" value="protein"/>
</dbReference>
<dbReference type="Bgee" id="ENSG00000183605">
    <property type="expression patterns" value="Expressed in apex of heart and 183 other cell types or tissues"/>
</dbReference>
<dbReference type="ExpressionAtlas" id="Q6P4A7">
    <property type="expression patterns" value="baseline and differential"/>
</dbReference>
<dbReference type="GO" id="GO:0043231">
    <property type="term" value="C:intracellular membrane-bounded organelle"/>
    <property type="evidence" value="ECO:0000314"/>
    <property type="project" value="HPA"/>
</dbReference>
<dbReference type="GO" id="GO:0005743">
    <property type="term" value="C:mitochondrial inner membrane"/>
    <property type="evidence" value="ECO:0000318"/>
    <property type="project" value="GO_Central"/>
</dbReference>
<dbReference type="GO" id="GO:0005739">
    <property type="term" value="C:mitochondrion"/>
    <property type="evidence" value="ECO:0000314"/>
    <property type="project" value="HPA"/>
</dbReference>
<dbReference type="GO" id="GO:0005654">
    <property type="term" value="C:nucleoplasm"/>
    <property type="evidence" value="ECO:0000314"/>
    <property type="project" value="HPA"/>
</dbReference>
<dbReference type="GO" id="GO:0015075">
    <property type="term" value="F:monoatomic ion transmembrane transporter activity"/>
    <property type="evidence" value="ECO:0007669"/>
    <property type="project" value="InterPro"/>
</dbReference>
<dbReference type="GO" id="GO:0022857">
    <property type="term" value="F:transmembrane transporter activity"/>
    <property type="evidence" value="ECO:0000318"/>
    <property type="project" value="GO_Central"/>
</dbReference>
<dbReference type="GO" id="GO:0006865">
    <property type="term" value="P:amino acid transport"/>
    <property type="evidence" value="ECO:0007669"/>
    <property type="project" value="UniProtKB-KW"/>
</dbReference>
<dbReference type="GO" id="GO:1990542">
    <property type="term" value="P:mitochondrial transmembrane transport"/>
    <property type="evidence" value="ECO:0000318"/>
    <property type="project" value="GO_Central"/>
</dbReference>
<dbReference type="InterPro" id="IPR004686">
    <property type="entry name" value="Mtc"/>
</dbReference>
<dbReference type="PANTHER" id="PTHR11153">
    <property type="entry name" value="SIDEROFLEXIN"/>
    <property type="match status" value="1"/>
</dbReference>
<dbReference type="PANTHER" id="PTHR11153:SF3">
    <property type="entry name" value="SIDEROFLEXIN-4"/>
    <property type="match status" value="1"/>
</dbReference>
<dbReference type="Pfam" id="PF03820">
    <property type="entry name" value="SFXNs"/>
    <property type="match status" value="1"/>
</dbReference>
<feature type="initiator methionine" description="Removed" evidence="11 13">
    <location>
        <position position="1"/>
    </location>
</feature>
<feature type="chain" id="PRO_0000177041" description="Sideroflexin-4">
    <location>
        <begin position="2"/>
        <end position="337"/>
    </location>
</feature>
<feature type="transmembrane region" description="Helical" evidence="2">
    <location>
        <begin position="111"/>
        <end position="131"/>
    </location>
</feature>
<feature type="transmembrane region" description="Helical" evidence="2">
    <location>
        <begin position="133"/>
        <end position="153"/>
    </location>
</feature>
<feature type="transmembrane region" description="Helical" evidence="2">
    <location>
        <begin position="165"/>
        <end position="185"/>
    </location>
</feature>
<feature type="transmembrane region" description="Helical" evidence="2">
    <location>
        <begin position="251"/>
        <end position="271"/>
    </location>
</feature>
<feature type="transmembrane region" description="Helical" evidence="2">
    <location>
        <begin position="293"/>
        <end position="313"/>
    </location>
</feature>
<feature type="modified residue" description="N-acetylserine" evidence="11 13">
    <location>
        <position position="2"/>
    </location>
</feature>
<feature type="modified residue" description="N6-acetyllysine" evidence="12">
    <location>
        <position position="197"/>
    </location>
</feature>
<feature type="splice variant" id="VSP_014608" description="In isoform 3." evidence="7">
    <location>
        <begin position="1"/>
        <end position="116"/>
    </location>
</feature>
<feature type="splice variant" id="VSP_014609" description="In isoform 2." evidence="5">
    <location>
        <begin position="85"/>
        <end position="93"/>
    </location>
</feature>
<feature type="splice variant" id="VSP_014610" description="In isoform 2." evidence="5">
    <original>IQYCSLEEKIQSPTEETEIFYHRGV</original>
    <variation>VT</variation>
    <location>
        <begin position="313"/>
        <end position="337"/>
    </location>
</feature>
<sequence length="337" mass="37998">MSLEQEEETQPGRLLGRRDAVPAFIEPNVRFWITERQSFIRRFLQWTELLDPTNVFISVESIENSRQLLCTNEDVSSPASADQRIQEAWKRSLATVHPDSSNLIPKLFRPAAFLPFMAPTVFLSMTPLKGIKSVILPQVFLCAYMAAFNSINGNRSYTCKPLERSLLMAGAVASSTFLGVIPQFVQMKYGLTGPWIKRLLPVIFLVQASGMNVYMSRSLESIKGIAVMDKEGNVLGHSRIAGTKAVRETLASRIVLFGTSALIPEVFTYFFKRTQYFRKNPGSLWILKLSCTVLAMGLMVPFSFSIFPQIGQIQYCSLEEKIQSPTEETEIFYHRGV</sequence>